<proteinExistence type="inferred from homology"/>
<sequence length="447" mass="47277">MRYLPLTPEDRTEMLARIGAPSVDALFADIPAAKLDPALADLPAHKTELSVERTLGALSAQNVPAGSVPFFVGAGAYRHHVPATVDHLIQRSEFLTSYTPYQPEIAQGTLQYLFEFQTQVGELTGMEVANASMYDGSTAAAEAVLMAHRVTKRRKAVVAGNVHPHYRETIATLSLYADDAVVALSPVPQGGEDILSAIDGETSCVVVQSPDVFGNIVDLKPIAEKAHAAGALLIAVFTEVVSLGLIEPPGAQGADIVVGEGQSIGNPLTFGGPYVGLFATRQKYVRQMPGRLAGETVDASGKRGFVLTLSTREQHIRREKATSNICTNSGLCALAFTIHLTLLGETGLRKLARLNHANACKLADKLAAVPGVQVLNSAFFNEFTLRVPGKAVDVIEKLAAKGVLGGVPYARLAPKAGLDDLILVAATEINTDEDRAAYAAALKEVLA</sequence>
<dbReference type="EC" id="1.4.4.2" evidence="1"/>
<dbReference type="EMBL" id="AP009384">
    <property type="protein sequence ID" value="BAF90246.1"/>
    <property type="molecule type" value="Genomic_DNA"/>
</dbReference>
<dbReference type="RefSeq" id="WP_012172768.1">
    <property type="nucleotide sequence ID" value="NC_009937.1"/>
</dbReference>
<dbReference type="SMR" id="A8HT29"/>
<dbReference type="STRING" id="438753.AZC_4248"/>
<dbReference type="KEGG" id="azc:AZC_4248"/>
<dbReference type="eggNOG" id="COG0403">
    <property type="taxonomic scope" value="Bacteria"/>
</dbReference>
<dbReference type="HOGENOM" id="CLU_004620_0_2_5"/>
<dbReference type="Proteomes" id="UP000000270">
    <property type="component" value="Chromosome"/>
</dbReference>
<dbReference type="GO" id="GO:0004375">
    <property type="term" value="F:glycine dehydrogenase (decarboxylating) activity"/>
    <property type="evidence" value="ECO:0007669"/>
    <property type="project" value="UniProtKB-EC"/>
</dbReference>
<dbReference type="GO" id="GO:0019464">
    <property type="term" value="P:glycine decarboxylation via glycine cleavage system"/>
    <property type="evidence" value="ECO:0007669"/>
    <property type="project" value="UniProtKB-UniRule"/>
</dbReference>
<dbReference type="GO" id="GO:0009116">
    <property type="term" value="P:nucleoside metabolic process"/>
    <property type="evidence" value="ECO:0007669"/>
    <property type="project" value="InterPro"/>
</dbReference>
<dbReference type="CDD" id="cd00613">
    <property type="entry name" value="GDC-P"/>
    <property type="match status" value="1"/>
</dbReference>
<dbReference type="Gene3D" id="3.90.1150.10">
    <property type="entry name" value="Aspartate Aminotransferase, domain 1"/>
    <property type="match status" value="1"/>
</dbReference>
<dbReference type="Gene3D" id="3.40.640.10">
    <property type="entry name" value="Type I PLP-dependent aspartate aminotransferase-like (Major domain)"/>
    <property type="match status" value="1"/>
</dbReference>
<dbReference type="HAMAP" id="MF_00712">
    <property type="entry name" value="GcvPA"/>
    <property type="match status" value="1"/>
</dbReference>
<dbReference type="InterPro" id="IPR023010">
    <property type="entry name" value="GcvPA"/>
</dbReference>
<dbReference type="InterPro" id="IPR049315">
    <property type="entry name" value="GDC-P_N"/>
</dbReference>
<dbReference type="InterPro" id="IPR020581">
    <property type="entry name" value="GDC_P"/>
</dbReference>
<dbReference type="InterPro" id="IPR015424">
    <property type="entry name" value="PyrdxlP-dep_Trfase"/>
</dbReference>
<dbReference type="InterPro" id="IPR015421">
    <property type="entry name" value="PyrdxlP-dep_Trfase_major"/>
</dbReference>
<dbReference type="InterPro" id="IPR015422">
    <property type="entry name" value="PyrdxlP-dep_Trfase_small"/>
</dbReference>
<dbReference type="NCBIfam" id="NF001696">
    <property type="entry name" value="PRK00451.1"/>
    <property type="match status" value="1"/>
</dbReference>
<dbReference type="PANTHER" id="PTHR42806">
    <property type="entry name" value="GLYCINE CLEAVAGE SYSTEM P-PROTEIN"/>
    <property type="match status" value="1"/>
</dbReference>
<dbReference type="PANTHER" id="PTHR42806:SF1">
    <property type="entry name" value="GLYCINE DEHYDROGENASE (DECARBOXYLATING)"/>
    <property type="match status" value="1"/>
</dbReference>
<dbReference type="Pfam" id="PF02347">
    <property type="entry name" value="GDC-P"/>
    <property type="match status" value="1"/>
</dbReference>
<dbReference type="PIRSF" id="PIRSF006815">
    <property type="entry name" value="GcvPA"/>
    <property type="match status" value="1"/>
</dbReference>
<dbReference type="SUPFAM" id="SSF53383">
    <property type="entry name" value="PLP-dependent transferases"/>
    <property type="match status" value="1"/>
</dbReference>
<accession>A8HT29</accession>
<comment type="function">
    <text evidence="1">The glycine cleavage system catalyzes the degradation of glycine. The P protein binds the alpha-amino group of glycine through its pyridoxal phosphate cofactor; CO(2) is released and the remaining methylamine moiety is then transferred to the lipoamide cofactor of the H protein.</text>
</comment>
<comment type="catalytic activity">
    <reaction evidence="1">
        <text>N(6)-[(R)-lipoyl]-L-lysyl-[glycine-cleavage complex H protein] + glycine + H(+) = N(6)-[(R)-S(8)-aminomethyldihydrolipoyl]-L-lysyl-[glycine-cleavage complex H protein] + CO2</text>
        <dbReference type="Rhea" id="RHEA:24304"/>
        <dbReference type="Rhea" id="RHEA-COMP:10494"/>
        <dbReference type="Rhea" id="RHEA-COMP:10495"/>
        <dbReference type="ChEBI" id="CHEBI:15378"/>
        <dbReference type="ChEBI" id="CHEBI:16526"/>
        <dbReference type="ChEBI" id="CHEBI:57305"/>
        <dbReference type="ChEBI" id="CHEBI:83099"/>
        <dbReference type="ChEBI" id="CHEBI:83143"/>
        <dbReference type="EC" id="1.4.4.2"/>
    </reaction>
</comment>
<comment type="subunit">
    <text evidence="1">The glycine cleavage system is composed of four proteins: P, T, L and H. In this organism, the P 'protein' is a heterodimer of two subunits.</text>
</comment>
<comment type="similarity">
    <text evidence="1">Belongs to the GcvP family. N-terminal subunit subfamily.</text>
</comment>
<reference key="1">
    <citation type="submission" date="2007-04" db="EMBL/GenBank/DDBJ databases">
        <title>Complete genome sequence of the nitrogen-fixing bacterium Azorhizobium caulinodans ORS571.</title>
        <authorList>
            <person name="Lee K.B."/>
            <person name="Backer P.D."/>
            <person name="Aono T."/>
            <person name="Liu C.T."/>
            <person name="Suzuki S."/>
            <person name="Suzuki T."/>
            <person name="Kaneko T."/>
            <person name="Yamada M."/>
            <person name="Tabata S."/>
            <person name="Kupfer D.M."/>
            <person name="Najar F.Z."/>
            <person name="Wiley G.B."/>
            <person name="Roe B."/>
            <person name="Binnewies T."/>
            <person name="Ussery D."/>
            <person name="Vereecke D."/>
            <person name="Gevers D."/>
            <person name="Holsters M."/>
            <person name="Oyaizu H."/>
        </authorList>
    </citation>
    <scope>NUCLEOTIDE SEQUENCE [LARGE SCALE GENOMIC DNA]</scope>
    <source>
        <strain>ATCC 43989 / DSM 5975 / JCM 20966 / LMG 6465 / NBRC 14845 / NCIMB 13405 / ORS 571</strain>
    </source>
</reference>
<feature type="chain" id="PRO_1000072767" description="Probable glycine dehydrogenase (decarboxylating) subunit 1">
    <location>
        <begin position="1"/>
        <end position="447"/>
    </location>
</feature>
<gene>
    <name evidence="1" type="primary">gcvPA</name>
    <name type="ordered locus">AZC_4248</name>
</gene>
<evidence type="ECO:0000255" key="1">
    <source>
        <dbReference type="HAMAP-Rule" id="MF_00712"/>
    </source>
</evidence>
<organism>
    <name type="scientific">Azorhizobium caulinodans (strain ATCC 43989 / DSM 5975 / JCM 20966 / LMG 6465 / NBRC 14845 / NCIMB 13405 / ORS 571)</name>
    <dbReference type="NCBI Taxonomy" id="438753"/>
    <lineage>
        <taxon>Bacteria</taxon>
        <taxon>Pseudomonadati</taxon>
        <taxon>Pseudomonadota</taxon>
        <taxon>Alphaproteobacteria</taxon>
        <taxon>Hyphomicrobiales</taxon>
        <taxon>Xanthobacteraceae</taxon>
        <taxon>Azorhizobium</taxon>
    </lineage>
</organism>
<name>GCSPA_AZOC5</name>
<keyword id="KW-0560">Oxidoreductase</keyword>
<keyword id="KW-1185">Reference proteome</keyword>
<protein>
    <recommendedName>
        <fullName evidence="1">Probable glycine dehydrogenase (decarboxylating) subunit 1</fullName>
        <ecNumber evidence="1">1.4.4.2</ecNumber>
    </recommendedName>
    <alternativeName>
        <fullName evidence="1">Glycine cleavage system P-protein subunit 1</fullName>
    </alternativeName>
    <alternativeName>
        <fullName evidence="1">Glycine decarboxylase subunit 1</fullName>
    </alternativeName>
    <alternativeName>
        <fullName evidence="1">Glycine dehydrogenase (aminomethyl-transferring) subunit 1</fullName>
    </alternativeName>
</protein>